<dbReference type="EMBL" id="Z46729">
    <property type="protein sequence ID" value="CAA86722.1"/>
    <property type="molecule type" value="Genomic_DNA"/>
</dbReference>
<dbReference type="EMBL" id="AY557974">
    <property type="protein sequence ID" value="AAS56300.1"/>
    <property type="molecule type" value="Genomic_DNA"/>
</dbReference>
<dbReference type="EMBL" id="BK006946">
    <property type="protein sequence ID" value="DAA09846.1"/>
    <property type="molecule type" value="Genomic_DNA"/>
</dbReference>
<dbReference type="PIR" id="S49807">
    <property type="entry name" value="S49807"/>
</dbReference>
<dbReference type="RefSeq" id="NP_013659.1">
    <property type="nucleotide sequence ID" value="NM_001182411.1"/>
</dbReference>
<dbReference type="BioGRID" id="35115">
    <property type="interactions" value="119"/>
</dbReference>
<dbReference type="DIP" id="DIP-1950N"/>
<dbReference type="FunCoup" id="Q04978">
    <property type="interactions" value="57"/>
</dbReference>
<dbReference type="IntAct" id="Q04978">
    <property type="interactions" value="3"/>
</dbReference>
<dbReference type="MINT" id="Q04978"/>
<dbReference type="STRING" id="4932.YML053C"/>
<dbReference type="iPTMnet" id="Q04978"/>
<dbReference type="PaxDb" id="4932-YML053C"/>
<dbReference type="PeptideAtlas" id="Q04978"/>
<dbReference type="EnsemblFungi" id="YML053C_mRNA">
    <property type="protein sequence ID" value="YML053C"/>
    <property type="gene ID" value="YML053C"/>
</dbReference>
<dbReference type="GeneID" id="854952"/>
<dbReference type="KEGG" id="sce:YML053C"/>
<dbReference type="AGR" id="SGD:S000004517"/>
<dbReference type="SGD" id="S000004517">
    <property type="gene designation" value="YML053C"/>
</dbReference>
<dbReference type="VEuPathDB" id="FungiDB:YML053C"/>
<dbReference type="HOGENOM" id="CLU_1384861_0_0_1"/>
<dbReference type="InParanoid" id="Q04978"/>
<dbReference type="OMA" id="XFYSETE"/>
<dbReference type="OrthoDB" id="4065594at2759"/>
<dbReference type="BioCyc" id="YEAST:G3O-32650-MONOMER"/>
<dbReference type="BioGRID-ORCS" id="854952">
    <property type="hits" value="0 hits in 10 CRISPR screens"/>
</dbReference>
<dbReference type="PRO" id="PR:Q04978"/>
<dbReference type="Proteomes" id="UP000002311">
    <property type="component" value="Chromosome XIII"/>
</dbReference>
<dbReference type="RNAct" id="Q04978">
    <property type="molecule type" value="protein"/>
</dbReference>
<dbReference type="GO" id="GO:0005737">
    <property type="term" value="C:cytoplasm"/>
    <property type="evidence" value="ECO:0007005"/>
    <property type="project" value="SGD"/>
</dbReference>
<dbReference type="GO" id="GO:0005634">
    <property type="term" value="C:nucleus"/>
    <property type="evidence" value="ECO:0007005"/>
    <property type="project" value="SGD"/>
</dbReference>
<name>YMF3_YEAST</name>
<organism>
    <name type="scientific">Saccharomyces cerevisiae (strain ATCC 204508 / S288c)</name>
    <name type="common">Baker's yeast</name>
    <dbReference type="NCBI Taxonomy" id="559292"/>
    <lineage>
        <taxon>Eukaryota</taxon>
        <taxon>Fungi</taxon>
        <taxon>Dikarya</taxon>
        <taxon>Ascomycota</taxon>
        <taxon>Saccharomycotina</taxon>
        <taxon>Saccharomycetes</taxon>
        <taxon>Saccharomycetales</taxon>
        <taxon>Saccharomycetaceae</taxon>
        <taxon>Saccharomyces</taxon>
    </lineage>
</organism>
<accession>Q04978</accession>
<accession>D6VZC2</accession>
<protein>
    <recommendedName>
        <fullName>Uncharacterized protein YML053C</fullName>
    </recommendedName>
</protein>
<reference key="1">
    <citation type="journal article" date="1997" name="Nature">
        <title>The nucleotide sequence of Saccharomyces cerevisiae chromosome XIII.</title>
        <authorList>
            <person name="Bowman S."/>
            <person name="Churcher C.M."/>
            <person name="Badcock K."/>
            <person name="Brown D."/>
            <person name="Chillingworth T."/>
            <person name="Connor R."/>
            <person name="Dedman K."/>
            <person name="Devlin K."/>
            <person name="Gentles S."/>
            <person name="Hamlin N."/>
            <person name="Hunt S."/>
            <person name="Jagels K."/>
            <person name="Lye G."/>
            <person name="Moule S."/>
            <person name="Odell C."/>
            <person name="Pearson D."/>
            <person name="Rajandream M.A."/>
            <person name="Rice P."/>
            <person name="Skelton J."/>
            <person name="Walsh S.V."/>
            <person name="Whitehead S."/>
            <person name="Barrell B.G."/>
        </authorList>
    </citation>
    <scope>NUCLEOTIDE SEQUENCE [LARGE SCALE GENOMIC DNA]</scope>
    <source>
        <strain>ATCC 204508 / S288c</strain>
    </source>
</reference>
<reference key="2">
    <citation type="journal article" date="2014" name="G3 (Bethesda)">
        <title>The reference genome sequence of Saccharomyces cerevisiae: Then and now.</title>
        <authorList>
            <person name="Engel S.R."/>
            <person name="Dietrich F.S."/>
            <person name="Fisk D.G."/>
            <person name="Binkley G."/>
            <person name="Balakrishnan R."/>
            <person name="Costanzo M.C."/>
            <person name="Dwight S.S."/>
            <person name="Hitz B.C."/>
            <person name="Karra K."/>
            <person name="Nash R.S."/>
            <person name="Weng S."/>
            <person name="Wong E.D."/>
            <person name="Lloyd P."/>
            <person name="Skrzypek M.S."/>
            <person name="Miyasato S.R."/>
            <person name="Simison M."/>
            <person name="Cherry J.M."/>
        </authorList>
    </citation>
    <scope>GENOME REANNOTATION</scope>
    <source>
        <strain>ATCC 204508 / S288c</strain>
    </source>
</reference>
<reference key="3">
    <citation type="journal article" date="2007" name="Genome Res.">
        <title>Approaching a complete repository of sequence-verified protein-encoding clones for Saccharomyces cerevisiae.</title>
        <authorList>
            <person name="Hu Y."/>
            <person name="Rolfs A."/>
            <person name="Bhullar B."/>
            <person name="Murthy T.V.S."/>
            <person name="Zhu C."/>
            <person name="Berger M.F."/>
            <person name="Camargo A.A."/>
            <person name="Kelley F."/>
            <person name="McCarron S."/>
            <person name="Jepson D."/>
            <person name="Richardson A."/>
            <person name="Raphael J."/>
            <person name="Moreira D."/>
            <person name="Taycher E."/>
            <person name="Zuo D."/>
            <person name="Mohr S."/>
            <person name="Kane M.F."/>
            <person name="Williamson J."/>
            <person name="Simpson A.J.G."/>
            <person name="Bulyk M.L."/>
            <person name="Harlow E."/>
            <person name="Marsischky G."/>
            <person name="Kolodner R.D."/>
            <person name="LaBaer J."/>
        </authorList>
    </citation>
    <scope>NUCLEOTIDE SEQUENCE [GENOMIC DNA]</scope>
    <source>
        <strain>ATCC 204508 / S288c</strain>
    </source>
</reference>
<reference key="4">
    <citation type="journal article" date="2003" name="Nature">
        <title>Global analysis of protein expression in yeast.</title>
        <authorList>
            <person name="Ghaemmaghami S."/>
            <person name="Huh W.-K."/>
            <person name="Bower K."/>
            <person name="Howson R.W."/>
            <person name="Belle A."/>
            <person name="Dephoure N."/>
            <person name="O'Shea E.K."/>
            <person name="Weissman J.S."/>
        </authorList>
    </citation>
    <scope>LEVEL OF PROTEIN EXPRESSION [LARGE SCALE ANALYSIS]</scope>
</reference>
<gene>
    <name type="ordered locus">YML053C</name>
    <name type="ORF">YM9958.09C</name>
</gene>
<evidence type="ECO:0000256" key="1">
    <source>
        <dbReference type="SAM" id="MobiDB-lite"/>
    </source>
</evidence>
<evidence type="ECO:0000269" key="2">
    <source>
    </source>
</evidence>
<proteinExistence type="evidence at protein level"/>
<feature type="chain" id="PRO_0000203254" description="Uncharacterized protein YML053C">
    <location>
        <begin position="1"/>
        <end position="212"/>
    </location>
</feature>
<feature type="region of interest" description="Disordered" evidence="1">
    <location>
        <begin position="87"/>
        <end position="107"/>
    </location>
</feature>
<feature type="compositionally biased region" description="Low complexity" evidence="1">
    <location>
        <begin position="87"/>
        <end position="105"/>
    </location>
</feature>
<comment type="miscellaneous">
    <text evidence="2">Present with 656 molecules/cell in log phase SD medium.</text>
</comment>
<sequence>MLSYYEHNTAFQTNNCNSGSNAATTYNSDANNDTIMNKRKNDHFEFDTHTFYQRSKRTKRDSVSTKFSVGSGCANLNNNNNNIIINNNNNNNNNNNNHNHNNSNNTATYNNIHYKKNIEICPLKPVSMHHTMNSRLLNESEFYSETEEYMIHGYFGNTNRDITGTSPTGSASIIQHQYHLLPSQSIIASQAPGTAMAALTNNNIANDYMDID</sequence>
<keyword id="KW-1185">Reference proteome</keyword>